<reference key="1">
    <citation type="journal article" date="2004" name="Vet. Immunol. Immunopathol.">
        <title>Cloning and sequence analysis of llama cytokines related to cell-mediated immunity.</title>
        <authorList>
            <person name="Odbileg R."/>
            <person name="Lee S.-I."/>
            <person name="Yoshida R."/>
            <person name="Chang K.-S."/>
            <person name="Ohashi K."/>
            <person name="Sugimoto C."/>
            <person name="Onuma M."/>
        </authorList>
    </citation>
    <scope>NUCLEOTIDE SEQUENCE [MRNA]</scope>
</reference>
<sequence length="166" mass="19476">MNYTSYILAFQLCVILGSSGCYCQAPFFDEIENLKKYFNASHPDVADGGPLFLEILKNWKEESDKKIIQSQIVSFYFKLFENLKDNRIIQRSMDIIKQDMFQKFLNGSSEKLEDFKKLIQIPVDNLKVQRKAISELIKVMNDLSPKSNLRKRKRRQNQIQGRRASK</sequence>
<evidence type="ECO:0000250" key="1"/>
<evidence type="ECO:0000250" key="2">
    <source>
        <dbReference type="UniProtKB" id="P01579"/>
    </source>
</evidence>
<evidence type="ECO:0000250" key="3">
    <source>
        <dbReference type="UniProtKB" id="P01580"/>
    </source>
</evidence>
<evidence type="ECO:0000255" key="4"/>
<evidence type="ECO:0000256" key="5">
    <source>
        <dbReference type="SAM" id="MobiDB-lite"/>
    </source>
</evidence>
<evidence type="ECO:0000305" key="6"/>
<dbReference type="EMBL" id="AB107652">
    <property type="protein sequence ID" value="BAC75389.1"/>
    <property type="molecule type" value="mRNA"/>
</dbReference>
<dbReference type="SMR" id="Q865X1"/>
<dbReference type="GlyCosmos" id="Q865X1">
    <property type="glycosylation" value="2 sites, No reported glycans"/>
</dbReference>
<dbReference type="GO" id="GO:0005615">
    <property type="term" value="C:extracellular space"/>
    <property type="evidence" value="ECO:0007669"/>
    <property type="project" value="UniProtKB-KW"/>
</dbReference>
<dbReference type="GO" id="GO:0005125">
    <property type="term" value="F:cytokine activity"/>
    <property type="evidence" value="ECO:0007669"/>
    <property type="project" value="UniProtKB-KW"/>
</dbReference>
<dbReference type="GO" id="GO:0005133">
    <property type="term" value="F:type II interferon receptor binding"/>
    <property type="evidence" value="ECO:0007669"/>
    <property type="project" value="InterPro"/>
</dbReference>
<dbReference type="GO" id="GO:0002250">
    <property type="term" value="P:adaptive immune response"/>
    <property type="evidence" value="ECO:0007669"/>
    <property type="project" value="TreeGrafter"/>
</dbReference>
<dbReference type="GO" id="GO:0051607">
    <property type="term" value="P:defense response to virus"/>
    <property type="evidence" value="ECO:0007669"/>
    <property type="project" value="UniProtKB-KW"/>
</dbReference>
<dbReference type="GO" id="GO:0006959">
    <property type="term" value="P:humoral immune response"/>
    <property type="evidence" value="ECO:0007669"/>
    <property type="project" value="TreeGrafter"/>
</dbReference>
<dbReference type="GO" id="GO:0010508">
    <property type="term" value="P:positive regulation of autophagy"/>
    <property type="evidence" value="ECO:0000250"/>
    <property type="project" value="UniProtKB"/>
</dbReference>
<dbReference type="FunFam" id="1.20.1250.10:FF:000080">
    <property type="entry name" value="Interferon gamma"/>
    <property type="match status" value="1"/>
</dbReference>
<dbReference type="Gene3D" id="1.20.1250.10">
    <property type="match status" value="1"/>
</dbReference>
<dbReference type="InterPro" id="IPR009079">
    <property type="entry name" value="4_helix_cytokine-like_core"/>
</dbReference>
<dbReference type="InterPro" id="IPR002069">
    <property type="entry name" value="Interferon_gamma"/>
</dbReference>
<dbReference type="PANTHER" id="PTHR11419">
    <property type="entry name" value="INTERFERON GAMMA"/>
    <property type="match status" value="1"/>
</dbReference>
<dbReference type="PANTHER" id="PTHR11419:SF0">
    <property type="entry name" value="INTERFERON GAMMA"/>
    <property type="match status" value="1"/>
</dbReference>
<dbReference type="Pfam" id="PF00714">
    <property type="entry name" value="IFN-gamma"/>
    <property type="match status" value="1"/>
</dbReference>
<dbReference type="PIRSF" id="PIRSF001936">
    <property type="entry name" value="IFN-gamma"/>
    <property type="match status" value="1"/>
</dbReference>
<dbReference type="SUPFAM" id="SSF47266">
    <property type="entry name" value="4-helical cytokines"/>
    <property type="match status" value="1"/>
</dbReference>
<organism>
    <name type="scientific">Lama glama</name>
    <name type="common">Llama</name>
    <dbReference type="NCBI Taxonomy" id="9844"/>
    <lineage>
        <taxon>Eukaryota</taxon>
        <taxon>Metazoa</taxon>
        <taxon>Chordata</taxon>
        <taxon>Craniata</taxon>
        <taxon>Vertebrata</taxon>
        <taxon>Euteleostomi</taxon>
        <taxon>Mammalia</taxon>
        <taxon>Eutheria</taxon>
        <taxon>Laurasiatheria</taxon>
        <taxon>Artiodactyla</taxon>
        <taxon>Tylopoda</taxon>
        <taxon>Camelidae</taxon>
        <taxon>Lama</taxon>
    </lineage>
</organism>
<protein>
    <recommendedName>
        <fullName>Interferon gamma</fullName>
        <shortName>IFN-gamma</shortName>
    </recommendedName>
</protein>
<proteinExistence type="evidence at transcript level"/>
<name>IFNG_LAMGL</name>
<comment type="function">
    <text evidence="2 3">Type II interferon produced by immune cells such as T-cells and NK cells that plays crucial roles in antimicrobial, antiviral, and antitumor responses by activating effector immune cells and enhancing antigen presentation. Primarily signals through the JAK-STAT pathway after interaction with its receptor IFNGR1 to affect gene regulation. Upon IFNG binding, IFNGR1 intracellular domain opens out to allow association of downstream signaling components JAK2, JAK1 and STAT1, leading to STAT1 activation, nuclear translocation and transcription of IFNG-regulated genes. Many of the induced genes are transcription factors such as IRF1 that are able to further drive regulation of a next wave of transcription. Plays a role in class I antigen presentation pathway by inducing a replacement of catalytic proteasome subunits with immunoproteasome subunits. In turn, increases the quantity, quality, and repertoire of peptides for class I MHC loading. Increases the efficiency of peptide generation also by inducing the expression of activator PA28 that associates with the proteasome and alters its proteolytic cleavage preference. Up-regulates as well MHC II complexes on the cell surface by promoting expression of several key molecules such as cathepsins B/CTSB, H/CTSH, and L/CTSL (By similarity). Participates in the regulation of hematopoietic stem cells during development and under homeostatic conditions by affecting their development, quiescence, and differentiation (By similarity).</text>
</comment>
<comment type="subunit">
    <text evidence="2">Homodimer. Interacts with IFNGR1 (via extracellular domain); this interaction promotes IFNGR1 dimerization.</text>
</comment>
<comment type="subcellular location">
    <subcellularLocation>
        <location evidence="2">Secreted</location>
    </subcellularLocation>
</comment>
<comment type="tissue specificity">
    <text>Released primarily from activated T lymphocytes.</text>
</comment>
<comment type="similarity">
    <text evidence="6">Belongs to the type II (or gamma) interferon family.</text>
</comment>
<accession>Q865X1</accession>
<feature type="signal peptide" evidence="1">
    <location>
        <begin position="1"/>
        <end position="23"/>
    </location>
</feature>
<feature type="chain" id="PRO_0000016445" description="Interferon gamma">
    <location>
        <begin position="24"/>
        <end position="166"/>
    </location>
</feature>
<feature type="region of interest" description="Disordered" evidence="5">
    <location>
        <begin position="147"/>
        <end position="166"/>
    </location>
</feature>
<feature type="modified residue" description="Pyrrolidone carboxylic acid" evidence="2">
    <location>
        <position position="24"/>
    </location>
</feature>
<feature type="glycosylation site" description="N-linked (GlcNAc...) asparagine" evidence="4">
    <location>
        <position position="39"/>
    </location>
</feature>
<feature type="glycosylation site" description="N-linked (GlcNAc...) asparagine" evidence="4">
    <location>
        <position position="106"/>
    </location>
</feature>
<gene>
    <name type="primary">IFNG</name>
</gene>
<keyword id="KW-0051">Antiviral defense</keyword>
<keyword id="KW-0202">Cytokine</keyword>
<keyword id="KW-0325">Glycoprotein</keyword>
<keyword id="KW-0341">Growth regulation</keyword>
<keyword id="KW-0873">Pyrrolidone carboxylic acid</keyword>
<keyword id="KW-0964">Secreted</keyword>
<keyword id="KW-0732">Signal</keyword>